<dbReference type="EMBL" id="CP000301">
    <property type="protein sequence ID" value="ABD86977.1"/>
    <property type="molecule type" value="Genomic_DNA"/>
</dbReference>
<dbReference type="SMR" id="Q219F9"/>
<dbReference type="STRING" id="316056.RPC_1415"/>
<dbReference type="KEGG" id="rpc:RPC_1415"/>
<dbReference type="eggNOG" id="COG1825">
    <property type="taxonomic scope" value="Bacteria"/>
</dbReference>
<dbReference type="HOGENOM" id="CLU_075939_0_0_5"/>
<dbReference type="OrthoDB" id="9806411at2"/>
<dbReference type="GO" id="GO:0022625">
    <property type="term" value="C:cytosolic large ribosomal subunit"/>
    <property type="evidence" value="ECO:0007669"/>
    <property type="project" value="TreeGrafter"/>
</dbReference>
<dbReference type="GO" id="GO:0008097">
    <property type="term" value="F:5S rRNA binding"/>
    <property type="evidence" value="ECO:0007669"/>
    <property type="project" value="InterPro"/>
</dbReference>
<dbReference type="GO" id="GO:0003735">
    <property type="term" value="F:structural constituent of ribosome"/>
    <property type="evidence" value="ECO:0007669"/>
    <property type="project" value="InterPro"/>
</dbReference>
<dbReference type="GO" id="GO:0006412">
    <property type="term" value="P:translation"/>
    <property type="evidence" value="ECO:0007669"/>
    <property type="project" value="UniProtKB-UniRule"/>
</dbReference>
<dbReference type="CDD" id="cd00495">
    <property type="entry name" value="Ribosomal_L25_TL5_CTC"/>
    <property type="match status" value="1"/>
</dbReference>
<dbReference type="FunFam" id="2.170.120.20:FF:000003">
    <property type="entry name" value="50S ribosomal protein L25"/>
    <property type="match status" value="1"/>
</dbReference>
<dbReference type="Gene3D" id="2.170.120.20">
    <property type="entry name" value="Ribosomal protein L25, beta domain"/>
    <property type="match status" value="1"/>
</dbReference>
<dbReference type="Gene3D" id="2.40.240.10">
    <property type="entry name" value="Ribosomal Protein L25, Chain P"/>
    <property type="match status" value="1"/>
</dbReference>
<dbReference type="HAMAP" id="MF_01334">
    <property type="entry name" value="Ribosomal_bL25_CTC"/>
    <property type="match status" value="1"/>
</dbReference>
<dbReference type="InterPro" id="IPR020056">
    <property type="entry name" value="Rbsml_bL25/Gln-tRNA_synth_N"/>
</dbReference>
<dbReference type="InterPro" id="IPR011035">
    <property type="entry name" value="Ribosomal_bL25/Gln-tRNA_synth"/>
</dbReference>
<dbReference type="InterPro" id="IPR020057">
    <property type="entry name" value="Ribosomal_bL25_b-dom"/>
</dbReference>
<dbReference type="InterPro" id="IPR037121">
    <property type="entry name" value="Ribosomal_bL25_C"/>
</dbReference>
<dbReference type="InterPro" id="IPR001021">
    <property type="entry name" value="Ribosomal_bL25_long"/>
</dbReference>
<dbReference type="InterPro" id="IPR029751">
    <property type="entry name" value="Ribosomal_L25_dom"/>
</dbReference>
<dbReference type="InterPro" id="IPR020930">
    <property type="entry name" value="Ribosomal_uL5_bac-type"/>
</dbReference>
<dbReference type="NCBIfam" id="TIGR00731">
    <property type="entry name" value="bL25_bact_ctc"/>
    <property type="match status" value="1"/>
</dbReference>
<dbReference type="NCBIfam" id="NF004128">
    <property type="entry name" value="PRK05618.1-2"/>
    <property type="match status" value="1"/>
</dbReference>
<dbReference type="PANTHER" id="PTHR33284">
    <property type="entry name" value="RIBOSOMAL PROTEIN L25/GLN-TRNA SYNTHETASE, ANTI-CODON-BINDING DOMAIN-CONTAINING PROTEIN"/>
    <property type="match status" value="1"/>
</dbReference>
<dbReference type="PANTHER" id="PTHR33284:SF1">
    <property type="entry name" value="RIBOSOMAL PROTEIN L25_GLN-TRNA SYNTHETASE, ANTI-CODON-BINDING DOMAIN-CONTAINING PROTEIN"/>
    <property type="match status" value="1"/>
</dbReference>
<dbReference type="Pfam" id="PF01386">
    <property type="entry name" value="Ribosomal_L25p"/>
    <property type="match status" value="1"/>
</dbReference>
<dbReference type="Pfam" id="PF14693">
    <property type="entry name" value="Ribosomal_TL5_C"/>
    <property type="match status" value="1"/>
</dbReference>
<dbReference type="SUPFAM" id="SSF50715">
    <property type="entry name" value="Ribosomal protein L25-like"/>
    <property type="match status" value="1"/>
</dbReference>
<proteinExistence type="inferred from homology"/>
<organism>
    <name type="scientific">Rhodopseudomonas palustris (strain BisB18)</name>
    <dbReference type="NCBI Taxonomy" id="316056"/>
    <lineage>
        <taxon>Bacteria</taxon>
        <taxon>Pseudomonadati</taxon>
        <taxon>Pseudomonadota</taxon>
        <taxon>Alphaproteobacteria</taxon>
        <taxon>Hyphomicrobiales</taxon>
        <taxon>Nitrobacteraceae</taxon>
        <taxon>Rhodopseudomonas</taxon>
    </lineage>
</organism>
<accession>Q219F9</accession>
<comment type="function">
    <text evidence="1">This is one of the proteins that binds to the 5S RNA in the ribosome where it forms part of the central protuberance.</text>
</comment>
<comment type="subunit">
    <text evidence="1">Part of the 50S ribosomal subunit; part of the 5S rRNA/L5/L18/L25 subcomplex. Contacts the 5S rRNA. Binds to the 5S rRNA independently of L5 and L18.</text>
</comment>
<comment type="similarity">
    <text evidence="1">Belongs to the bacterial ribosomal protein bL25 family. CTC subfamily.</text>
</comment>
<feature type="chain" id="PRO_0000244236" description="Large ribosomal subunit protein bL25">
    <location>
        <begin position="1"/>
        <end position="240"/>
    </location>
</feature>
<feature type="region of interest" description="Disordered" evidence="2">
    <location>
        <begin position="1"/>
        <end position="23"/>
    </location>
</feature>
<feature type="region of interest" description="Disordered" evidence="2">
    <location>
        <begin position="207"/>
        <end position="240"/>
    </location>
</feature>
<name>RL25_RHOPB</name>
<protein>
    <recommendedName>
        <fullName evidence="1">Large ribosomal subunit protein bL25</fullName>
    </recommendedName>
    <alternativeName>
        <fullName evidence="3">50S ribosomal protein L25</fullName>
    </alternativeName>
    <alternativeName>
        <fullName evidence="1">General stress protein CTC</fullName>
    </alternativeName>
</protein>
<keyword id="KW-0687">Ribonucleoprotein</keyword>
<keyword id="KW-0689">Ribosomal protein</keyword>
<keyword id="KW-0694">RNA-binding</keyword>
<keyword id="KW-0699">rRNA-binding</keyword>
<reference key="1">
    <citation type="submission" date="2006-03" db="EMBL/GenBank/DDBJ databases">
        <title>Complete sequence of Rhodopseudomonas palustris BisB18.</title>
        <authorList>
            <consortium name="US DOE Joint Genome Institute"/>
            <person name="Copeland A."/>
            <person name="Lucas S."/>
            <person name="Lapidus A."/>
            <person name="Barry K."/>
            <person name="Detter J.C."/>
            <person name="Glavina del Rio T."/>
            <person name="Hammon N."/>
            <person name="Israni S."/>
            <person name="Dalin E."/>
            <person name="Tice H."/>
            <person name="Pitluck S."/>
            <person name="Chain P."/>
            <person name="Malfatti S."/>
            <person name="Shin M."/>
            <person name="Vergez L."/>
            <person name="Schmutz J."/>
            <person name="Larimer F."/>
            <person name="Land M."/>
            <person name="Hauser L."/>
            <person name="Pelletier D.A."/>
            <person name="Kyrpides N."/>
            <person name="Anderson I."/>
            <person name="Oda Y."/>
            <person name="Harwood C.S."/>
            <person name="Richardson P."/>
        </authorList>
    </citation>
    <scope>NUCLEOTIDE SEQUENCE [LARGE SCALE GENOMIC DNA]</scope>
    <source>
        <strain>BisB18</strain>
    </source>
</reference>
<gene>
    <name evidence="1" type="primary">rplY</name>
    <name evidence="1" type="synonym">ctc</name>
    <name type="ordered locus">RPC_1415</name>
</gene>
<evidence type="ECO:0000255" key="1">
    <source>
        <dbReference type="HAMAP-Rule" id="MF_01334"/>
    </source>
</evidence>
<evidence type="ECO:0000256" key="2">
    <source>
        <dbReference type="SAM" id="MobiDB-lite"/>
    </source>
</evidence>
<evidence type="ECO:0000305" key="3"/>
<sequence length="240" mass="24701">MATVKELKATARPAGGKGAARAERRAGRVPGVIYGDNKPPVTISVDDTELRARILAGRFLTTIFDVELDGQKHRVIPRDFHLDPVRDFPIHVDFLRLGEGALIRVSVPLHLKNAEGAPGVKRGGTVNIVTHTVELEAEAESIPQFIEADVSQLDIGSSLHLSDVVLPKGVKTLSREDLTLVTIVPPSGYAEELKAAAAGPAAGAAAPAAAPAAGAKAPAAGAKAPAAGAKAPAAPAAKKK</sequence>